<comment type="function">
    <text evidence="1">Sulfur carrier protein involved in sulfur trafficking in the cell. Part of a sulfur-relay system required for 2-thiolation during synthesis of 2-thiouridine of the modified wobble base 5-methylaminomethyl-2-thiouridine (mnm(5)s(2)U) in tRNA. Interacts with IscS and stimulates its cysteine desulfurase activity. Accepts an activated sulfur from IscS, which is then transferred to TusD, and thus determines the direction of sulfur flow from IscS to 2-thiouridine formation. Also appears to be involved in sulfur transfer for the biosynthesis of molybdopterin.</text>
</comment>
<comment type="pathway">
    <text evidence="1">tRNA modification.</text>
</comment>
<comment type="subunit">
    <text evidence="1">Interacts with IscS.</text>
</comment>
<comment type="subcellular location">
    <subcellularLocation>
        <location evidence="1">Cytoplasm</location>
    </subcellularLocation>
</comment>
<comment type="similarity">
    <text evidence="1">Belongs to the sulfur carrier protein TusA family.</text>
</comment>
<proteinExistence type="inferred from homology"/>
<dbReference type="EMBL" id="CP000802">
    <property type="protein sequence ID" value="ABV07882.1"/>
    <property type="molecule type" value="Genomic_DNA"/>
</dbReference>
<dbReference type="RefSeq" id="WP_000130621.1">
    <property type="nucleotide sequence ID" value="NC_009800.1"/>
</dbReference>
<dbReference type="BMRB" id="A8A5S8"/>
<dbReference type="SMR" id="A8A5S8"/>
<dbReference type="GeneID" id="93778521"/>
<dbReference type="KEGG" id="ecx:EcHS_A3669"/>
<dbReference type="HOGENOM" id="CLU_165255_5_0_6"/>
<dbReference type="GO" id="GO:0005737">
    <property type="term" value="C:cytoplasm"/>
    <property type="evidence" value="ECO:0007669"/>
    <property type="project" value="UniProtKB-SubCell"/>
</dbReference>
<dbReference type="GO" id="GO:0097163">
    <property type="term" value="F:sulfur carrier activity"/>
    <property type="evidence" value="ECO:0007669"/>
    <property type="project" value="UniProtKB-UniRule"/>
</dbReference>
<dbReference type="GO" id="GO:0002143">
    <property type="term" value="P:tRNA wobble position uridine thiolation"/>
    <property type="evidence" value="ECO:0007669"/>
    <property type="project" value="InterPro"/>
</dbReference>
<dbReference type="CDD" id="cd03423">
    <property type="entry name" value="SirA"/>
    <property type="match status" value="1"/>
</dbReference>
<dbReference type="FunFam" id="3.30.110.40:FF:000002">
    <property type="entry name" value="Sulfur carrier protein TusA"/>
    <property type="match status" value="1"/>
</dbReference>
<dbReference type="Gene3D" id="3.30.110.40">
    <property type="entry name" value="TusA-like domain"/>
    <property type="match status" value="1"/>
</dbReference>
<dbReference type="HAMAP" id="MF_00413">
    <property type="entry name" value="Thiourid_synth_A"/>
    <property type="match status" value="1"/>
</dbReference>
<dbReference type="InterPro" id="IPR022931">
    <property type="entry name" value="Sulphur_carrier_TusA"/>
</dbReference>
<dbReference type="InterPro" id="IPR001455">
    <property type="entry name" value="TusA-like"/>
</dbReference>
<dbReference type="InterPro" id="IPR036868">
    <property type="entry name" value="TusA-like_sf"/>
</dbReference>
<dbReference type="NCBIfam" id="NF001423">
    <property type="entry name" value="PRK00299.1"/>
    <property type="match status" value="1"/>
</dbReference>
<dbReference type="PANTHER" id="PTHR33279:SF2">
    <property type="entry name" value="SULFUR CARRIER PROTEIN TUSA"/>
    <property type="match status" value="1"/>
</dbReference>
<dbReference type="PANTHER" id="PTHR33279">
    <property type="entry name" value="SULFUR CARRIER PROTEIN YEDF-RELATED"/>
    <property type="match status" value="1"/>
</dbReference>
<dbReference type="Pfam" id="PF01206">
    <property type="entry name" value="TusA"/>
    <property type="match status" value="1"/>
</dbReference>
<dbReference type="SUPFAM" id="SSF64307">
    <property type="entry name" value="SirA-like"/>
    <property type="match status" value="1"/>
</dbReference>
<dbReference type="PROSITE" id="PS01148">
    <property type="entry name" value="UPF0033"/>
    <property type="match status" value="1"/>
</dbReference>
<sequence>MTDLFSSPDHTLDALGLRCPEPVMMVRKTVRNMQPGETLLIIADDPATTRDIPGFCTFMEHELVAKETDGLPYRYLIRKGG</sequence>
<reference key="1">
    <citation type="journal article" date="2008" name="J. Bacteriol.">
        <title>The pangenome structure of Escherichia coli: comparative genomic analysis of E. coli commensal and pathogenic isolates.</title>
        <authorList>
            <person name="Rasko D.A."/>
            <person name="Rosovitz M.J."/>
            <person name="Myers G.S.A."/>
            <person name="Mongodin E.F."/>
            <person name="Fricke W.F."/>
            <person name="Gajer P."/>
            <person name="Crabtree J."/>
            <person name="Sebaihia M."/>
            <person name="Thomson N.R."/>
            <person name="Chaudhuri R."/>
            <person name="Henderson I.R."/>
            <person name="Sperandio V."/>
            <person name="Ravel J."/>
        </authorList>
    </citation>
    <scope>NUCLEOTIDE SEQUENCE [LARGE SCALE GENOMIC DNA]</scope>
    <source>
        <strain>HS</strain>
    </source>
</reference>
<protein>
    <recommendedName>
        <fullName evidence="1">Sulfur carrier protein TusA</fullName>
    </recommendedName>
    <alternativeName>
        <fullName evidence="1">Sulfur mediator TusA</fullName>
    </alternativeName>
    <alternativeName>
        <fullName evidence="1">Sulfur transfer protein TusA</fullName>
    </alternativeName>
    <alternativeName>
        <fullName evidence="1">tRNA 2-thiouridine synthesizing protein A</fullName>
    </alternativeName>
</protein>
<accession>A8A5S8</accession>
<organism>
    <name type="scientific">Escherichia coli O9:H4 (strain HS)</name>
    <dbReference type="NCBI Taxonomy" id="331112"/>
    <lineage>
        <taxon>Bacteria</taxon>
        <taxon>Pseudomonadati</taxon>
        <taxon>Pseudomonadota</taxon>
        <taxon>Gammaproteobacteria</taxon>
        <taxon>Enterobacterales</taxon>
        <taxon>Enterobacteriaceae</taxon>
        <taxon>Escherichia</taxon>
    </lineage>
</organism>
<keyword id="KW-0963">Cytoplasm</keyword>
<keyword id="KW-0819">tRNA processing</keyword>
<name>TUSA_ECOHS</name>
<evidence type="ECO:0000255" key="1">
    <source>
        <dbReference type="HAMAP-Rule" id="MF_00413"/>
    </source>
</evidence>
<feature type="chain" id="PRO_1000060060" description="Sulfur carrier protein TusA">
    <location>
        <begin position="1"/>
        <end position="81"/>
    </location>
</feature>
<feature type="active site" description="Cysteine persulfide intermediate" evidence="1">
    <location>
        <position position="19"/>
    </location>
</feature>
<gene>
    <name evidence="1" type="primary">tusA</name>
    <name type="ordered locus">EcHS_A3669</name>
</gene>